<sequence length="68" mass="8444">MIHVPVNANNSELAIRSLKKKMQRELVFRSMKMSRFYEPPSVKRVRKKQESERRHRKERAMRRRMMEE</sequence>
<protein>
    <recommendedName>
        <fullName evidence="1">Small ribosomal subunit protein bS21</fullName>
    </recommendedName>
    <alternativeName>
        <fullName evidence="3">30S ribosomal protein S21</fullName>
    </alternativeName>
</protein>
<feature type="chain" id="PRO_1000120643" description="Small ribosomal subunit protein bS21">
    <location>
        <begin position="1"/>
        <end position="68"/>
    </location>
</feature>
<feature type="region of interest" description="Disordered" evidence="2">
    <location>
        <begin position="39"/>
        <end position="68"/>
    </location>
</feature>
<feature type="compositionally biased region" description="Basic residues" evidence="2">
    <location>
        <begin position="54"/>
        <end position="68"/>
    </location>
</feature>
<dbReference type="EMBL" id="AP008981">
    <property type="protein sequence ID" value="BAG40812.1"/>
    <property type="molecule type" value="Genomic_DNA"/>
</dbReference>
<dbReference type="RefSeq" id="WP_012461860.1">
    <property type="nucleotide sequence ID" value="NC_010793.1"/>
</dbReference>
<dbReference type="SMR" id="B3CTW5"/>
<dbReference type="GeneID" id="89458784"/>
<dbReference type="KEGG" id="ott:OTT_1354"/>
<dbReference type="HOGENOM" id="CLU_159258_0_2_5"/>
<dbReference type="OrthoDB" id="9811907at2"/>
<dbReference type="Proteomes" id="UP000001033">
    <property type="component" value="Chromosome"/>
</dbReference>
<dbReference type="GO" id="GO:1990904">
    <property type="term" value="C:ribonucleoprotein complex"/>
    <property type="evidence" value="ECO:0007669"/>
    <property type="project" value="UniProtKB-KW"/>
</dbReference>
<dbReference type="GO" id="GO:0005840">
    <property type="term" value="C:ribosome"/>
    <property type="evidence" value="ECO:0007669"/>
    <property type="project" value="UniProtKB-KW"/>
</dbReference>
<dbReference type="GO" id="GO:0003735">
    <property type="term" value="F:structural constituent of ribosome"/>
    <property type="evidence" value="ECO:0007669"/>
    <property type="project" value="InterPro"/>
</dbReference>
<dbReference type="GO" id="GO:0006412">
    <property type="term" value="P:translation"/>
    <property type="evidence" value="ECO:0007669"/>
    <property type="project" value="UniProtKB-UniRule"/>
</dbReference>
<dbReference type="Gene3D" id="1.20.5.1150">
    <property type="entry name" value="Ribosomal protein S8"/>
    <property type="match status" value="1"/>
</dbReference>
<dbReference type="HAMAP" id="MF_00358">
    <property type="entry name" value="Ribosomal_bS21"/>
    <property type="match status" value="1"/>
</dbReference>
<dbReference type="InterPro" id="IPR001911">
    <property type="entry name" value="Ribosomal_bS21"/>
</dbReference>
<dbReference type="InterPro" id="IPR038380">
    <property type="entry name" value="Ribosomal_bS21_sf"/>
</dbReference>
<dbReference type="NCBIfam" id="TIGR00030">
    <property type="entry name" value="S21p"/>
    <property type="match status" value="1"/>
</dbReference>
<dbReference type="Pfam" id="PF01165">
    <property type="entry name" value="Ribosomal_S21"/>
    <property type="match status" value="1"/>
</dbReference>
<name>RS21_ORITI</name>
<gene>
    <name evidence="1" type="primary">rpsU</name>
    <name type="ordered locus">OTT_1354</name>
</gene>
<reference key="1">
    <citation type="journal article" date="2008" name="DNA Res.">
        <title>The whole-genome sequencing of the obligate intracellular bacterium Orientia tsutsugamushi revealed massive gene amplification during reductive genome evolution.</title>
        <authorList>
            <person name="Nakayama K."/>
            <person name="Yamashita A."/>
            <person name="Kurokawa K."/>
            <person name="Morimoto T."/>
            <person name="Ogawa M."/>
            <person name="Fukuhara M."/>
            <person name="Urakami H."/>
            <person name="Ohnishi M."/>
            <person name="Uchiyama I."/>
            <person name="Ogura Y."/>
            <person name="Ooka T."/>
            <person name="Oshima K."/>
            <person name="Tamura A."/>
            <person name="Hattori M."/>
            <person name="Hayashi T."/>
        </authorList>
    </citation>
    <scope>NUCLEOTIDE SEQUENCE [LARGE SCALE GENOMIC DNA]</scope>
    <source>
        <strain>Ikeda</strain>
    </source>
</reference>
<evidence type="ECO:0000255" key="1">
    <source>
        <dbReference type="HAMAP-Rule" id="MF_00358"/>
    </source>
</evidence>
<evidence type="ECO:0000256" key="2">
    <source>
        <dbReference type="SAM" id="MobiDB-lite"/>
    </source>
</evidence>
<evidence type="ECO:0000305" key="3"/>
<keyword id="KW-0687">Ribonucleoprotein</keyword>
<keyword id="KW-0689">Ribosomal protein</keyword>
<organism>
    <name type="scientific">Orientia tsutsugamushi (strain Ikeda)</name>
    <name type="common">Rickettsia tsutsugamushi</name>
    <dbReference type="NCBI Taxonomy" id="334380"/>
    <lineage>
        <taxon>Bacteria</taxon>
        <taxon>Pseudomonadati</taxon>
        <taxon>Pseudomonadota</taxon>
        <taxon>Alphaproteobacteria</taxon>
        <taxon>Rickettsiales</taxon>
        <taxon>Rickettsiaceae</taxon>
        <taxon>Rickettsieae</taxon>
        <taxon>Orientia</taxon>
    </lineage>
</organism>
<accession>B3CTW5</accession>
<comment type="similarity">
    <text evidence="1">Belongs to the bacterial ribosomal protein bS21 family.</text>
</comment>
<proteinExistence type="inferred from homology"/>